<feature type="chain" id="PRO_0000139094" description="Poly(A) polymerase I">
    <location>
        <begin position="1"/>
        <end position="465"/>
    </location>
</feature>
<feature type="region of interest" description="Disordered" evidence="2">
    <location>
        <begin position="430"/>
        <end position="465"/>
    </location>
</feature>
<feature type="compositionally biased region" description="Basic residues" evidence="2">
    <location>
        <begin position="448"/>
        <end position="459"/>
    </location>
</feature>
<feature type="active site" evidence="1">
    <location>
        <position position="80"/>
    </location>
</feature>
<feature type="active site" evidence="1">
    <location>
        <position position="82"/>
    </location>
</feature>
<feature type="active site" evidence="1">
    <location>
        <position position="162"/>
    </location>
</feature>
<sequence length="465" mass="53902">MFTRVANFCRKVLSREESEAEQAVARPHMTIIPREQHAISRKDISENALKVLYRLNKAGYEAYLVGGGVRDLLLGKKPKDFDVTTNATPDQVRKLFRNCRLVGRRFRLAHVMFGPEIIEVATFRGHNEGSESDRTTSQRGQNGMLLRDNIFGSIEEDAQRRDFTINSLYYSVADFTVRDYVGGMQDLQEGVIRLIGNPETRYREDPVRMLRAVRFAAKLNMRISPETAEPIPRLATLLNDIPPARLFEESLKLLQAGNGFETYQQLREYHLFQPLFPTITRYFTENGDSAMERIIAQVLKNTDNRIRNEMRVNPAFLFAAMFWYPLLEMAQKIAQESGLAYYDAFALAMNDVLDEACRSLAIPKRLTTLTRDIWQLQLRMSRRQGKRAWKLMEHPKFRAAFDLLELRAQVENNTELQRLAQWWAEFQASAPPEQKGMLNELDDDPAPRRRRSRPRKRAPRREGTV</sequence>
<evidence type="ECO:0000255" key="1">
    <source>
        <dbReference type="HAMAP-Rule" id="MF_00957"/>
    </source>
</evidence>
<evidence type="ECO:0000256" key="2">
    <source>
        <dbReference type="SAM" id="MobiDB-lite"/>
    </source>
</evidence>
<evidence type="ECO:0000305" key="3"/>
<organism>
    <name type="scientific">Salmonella typhi</name>
    <dbReference type="NCBI Taxonomy" id="90370"/>
    <lineage>
        <taxon>Bacteria</taxon>
        <taxon>Pseudomonadati</taxon>
        <taxon>Pseudomonadota</taxon>
        <taxon>Gammaproteobacteria</taxon>
        <taxon>Enterobacterales</taxon>
        <taxon>Enterobacteriaceae</taxon>
        <taxon>Salmonella</taxon>
    </lineage>
</organism>
<accession>Q8Z9C3</accession>
<gene>
    <name evidence="1" type="primary">pcnB</name>
    <name type="ordered locus">STY0209</name>
    <name type="ordered locus">t0192</name>
</gene>
<protein>
    <recommendedName>
        <fullName evidence="1">Poly(A) polymerase I</fullName>
        <shortName evidence="1">PAP I</shortName>
        <ecNumber evidence="1">2.7.7.19</ecNumber>
    </recommendedName>
</protein>
<name>PCNB_SALTI</name>
<dbReference type="EC" id="2.7.7.19" evidence="1"/>
<dbReference type="EMBL" id="AL513382">
    <property type="protein sequence ID" value="CAD01345.1"/>
    <property type="status" value="ALT_INIT"/>
    <property type="molecule type" value="Genomic_DNA"/>
</dbReference>
<dbReference type="EMBL" id="AE014613">
    <property type="protein sequence ID" value="AAO67924.1"/>
    <property type="status" value="ALT_INIT"/>
    <property type="molecule type" value="Genomic_DNA"/>
</dbReference>
<dbReference type="RefSeq" id="NP_454800.1">
    <property type="nucleotide sequence ID" value="NC_003198.1"/>
</dbReference>
<dbReference type="SMR" id="Q8Z9C3"/>
<dbReference type="STRING" id="220341.gene:17584247"/>
<dbReference type="KEGG" id="stt:t0192"/>
<dbReference type="KEGG" id="sty:STY0209"/>
<dbReference type="PATRIC" id="fig|220341.7.peg.212"/>
<dbReference type="eggNOG" id="COG0617">
    <property type="taxonomic scope" value="Bacteria"/>
</dbReference>
<dbReference type="HOGENOM" id="CLU_015961_0_0_6"/>
<dbReference type="OMA" id="FMAKLDM"/>
<dbReference type="Proteomes" id="UP000000541">
    <property type="component" value="Chromosome"/>
</dbReference>
<dbReference type="Proteomes" id="UP000002670">
    <property type="component" value="Chromosome"/>
</dbReference>
<dbReference type="GO" id="GO:0005524">
    <property type="term" value="F:ATP binding"/>
    <property type="evidence" value="ECO:0007669"/>
    <property type="project" value="UniProtKB-UniRule"/>
</dbReference>
<dbReference type="GO" id="GO:1990817">
    <property type="term" value="F:poly(A) RNA polymerase activity"/>
    <property type="evidence" value="ECO:0007669"/>
    <property type="project" value="UniProtKB-UniRule"/>
</dbReference>
<dbReference type="GO" id="GO:0003723">
    <property type="term" value="F:RNA binding"/>
    <property type="evidence" value="ECO:0007669"/>
    <property type="project" value="UniProtKB-UniRule"/>
</dbReference>
<dbReference type="GO" id="GO:0006397">
    <property type="term" value="P:mRNA processing"/>
    <property type="evidence" value="ECO:0007669"/>
    <property type="project" value="UniProtKB-KW"/>
</dbReference>
<dbReference type="GO" id="GO:0043633">
    <property type="term" value="P:polyadenylation-dependent RNA catabolic process"/>
    <property type="evidence" value="ECO:0007669"/>
    <property type="project" value="InterPro"/>
</dbReference>
<dbReference type="CDD" id="cd05398">
    <property type="entry name" value="NT_ClassII-CCAase"/>
    <property type="match status" value="1"/>
</dbReference>
<dbReference type="FunFam" id="1.10.3090.10:FF:000003">
    <property type="entry name" value="Poly(A) polymerase I"/>
    <property type="match status" value="1"/>
</dbReference>
<dbReference type="FunFam" id="3.30.460.10:FF:000035">
    <property type="entry name" value="Poly(A) polymerase I"/>
    <property type="match status" value="1"/>
</dbReference>
<dbReference type="Gene3D" id="3.30.460.10">
    <property type="entry name" value="Beta Polymerase, domain 2"/>
    <property type="match status" value="1"/>
</dbReference>
<dbReference type="Gene3D" id="1.10.3090.10">
    <property type="entry name" value="cca-adding enzyme, domain 2"/>
    <property type="match status" value="1"/>
</dbReference>
<dbReference type="HAMAP" id="MF_00957">
    <property type="entry name" value="PolyA_pol"/>
    <property type="match status" value="1"/>
</dbReference>
<dbReference type="InterPro" id="IPR043519">
    <property type="entry name" value="NT_sf"/>
</dbReference>
<dbReference type="InterPro" id="IPR002646">
    <property type="entry name" value="PolA_pol_head_dom"/>
</dbReference>
<dbReference type="InterPro" id="IPR010206">
    <property type="entry name" value="PolA_pol_I"/>
</dbReference>
<dbReference type="InterPro" id="IPR025866">
    <property type="entry name" value="PolyA_pol_arg_C_dom"/>
</dbReference>
<dbReference type="InterPro" id="IPR032828">
    <property type="entry name" value="PolyA_RNA-bd"/>
</dbReference>
<dbReference type="InterPro" id="IPR052191">
    <property type="entry name" value="tRNA_ntf/polyA_polymerase_I"/>
</dbReference>
<dbReference type="NCBIfam" id="TIGR01942">
    <property type="entry name" value="pcnB"/>
    <property type="match status" value="1"/>
</dbReference>
<dbReference type="NCBIfam" id="NF008634">
    <property type="entry name" value="PRK11623.1"/>
    <property type="match status" value="1"/>
</dbReference>
<dbReference type="PANTHER" id="PTHR43051">
    <property type="entry name" value="POLYNUCLEOTIDE ADENYLYLTRANSFERASE FAMILY PROTEIN"/>
    <property type="match status" value="1"/>
</dbReference>
<dbReference type="PANTHER" id="PTHR43051:SF1">
    <property type="entry name" value="POLYNUCLEOTIDE ADENYLYLTRANSFERASE FAMILY PROTEIN"/>
    <property type="match status" value="1"/>
</dbReference>
<dbReference type="Pfam" id="PF01743">
    <property type="entry name" value="PolyA_pol"/>
    <property type="match status" value="1"/>
</dbReference>
<dbReference type="Pfam" id="PF12626">
    <property type="entry name" value="PolyA_pol_arg_C"/>
    <property type="match status" value="1"/>
</dbReference>
<dbReference type="Pfam" id="PF12627">
    <property type="entry name" value="PolyA_pol_RNAbd"/>
    <property type="match status" value="1"/>
</dbReference>
<dbReference type="SUPFAM" id="SSF81301">
    <property type="entry name" value="Nucleotidyltransferase"/>
    <property type="match status" value="1"/>
</dbReference>
<dbReference type="SUPFAM" id="SSF81891">
    <property type="entry name" value="Poly A polymerase C-terminal region-like"/>
    <property type="match status" value="1"/>
</dbReference>
<keyword id="KW-0067">ATP-binding</keyword>
<keyword id="KW-0507">mRNA processing</keyword>
<keyword id="KW-0547">Nucleotide-binding</keyword>
<keyword id="KW-0694">RNA-binding</keyword>
<keyword id="KW-0804">Transcription</keyword>
<keyword id="KW-0808">Transferase</keyword>
<comment type="function">
    <text evidence="1">Adds poly(A) tail to the 3' end of many RNAs, which usually targets these RNAs for decay. Plays a significant role in the global control of gene expression, through influencing the rate of transcript degradation, and in the general RNA quality control.</text>
</comment>
<comment type="catalytic activity">
    <reaction evidence="1">
        <text>RNA(n) + ATP = RNA(n)-3'-adenine ribonucleotide + diphosphate</text>
        <dbReference type="Rhea" id="RHEA:11332"/>
        <dbReference type="Rhea" id="RHEA-COMP:14527"/>
        <dbReference type="Rhea" id="RHEA-COMP:17347"/>
        <dbReference type="ChEBI" id="CHEBI:30616"/>
        <dbReference type="ChEBI" id="CHEBI:33019"/>
        <dbReference type="ChEBI" id="CHEBI:140395"/>
        <dbReference type="ChEBI" id="CHEBI:173115"/>
        <dbReference type="EC" id="2.7.7.19"/>
    </reaction>
</comment>
<comment type="similarity">
    <text evidence="1">Belongs to the tRNA nucleotidyltransferase/poly(A) polymerase family.</text>
</comment>
<comment type="sequence caution" evidence="3">
    <conflict type="erroneous initiation">
        <sequence resource="EMBL-CDS" id="AAO67924"/>
    </conflict>
    <text>Extended N-terminus.</text>
</comment>
<comment type="sequence caution" evidence="3">
    <conflict type="erroneous initiation">
        <sequence resource="EMBL-CDS" id="CAD01345"/>
    </conflict>
    <text>Extended N-terminus.</text>
</comment>
<reference key="1">
    <citation type="journal article" date="2001" name="Nature">
        <title>Complete genome sequence of a multiple drug resistant Salmonella enterica serovar Typhi CT18.</title>
        <authorList>
            <person name="Parkhill J."/>
            <person name="Dougan G."/>
            <person name="James K.D."/>
            <person name="Thomson N.R."/>
            <person name="Pickard D."/>
            <person name="Wain J."/>
            <person name="Churcher C.M."/>
            <person name="Mungall K.L."/>
            <person name="Bentley S.D."/>
            <person name="Holden M.T.G."/>
            <person name="Sebaihia M."/>
            <person name="Baker S."/>
            <person name="Basham D."/>
            <person name="Brooks K."/>
            <person name="Chillingworth T."/>
            <person name="Connerton P."/>
            <person name="Cronin A."/>
            <person name="Davis P."/>
            <person name="Davies R.M."/>
            <person name="Dowd L."/>
            <person name="White N."/>
            <person name="Farrar J."/>
            <person name="Feltwell T."/>
            <person name="Hamlin N."/>
            <person name="Haque A."/>
            <person name="Hien T.T."/>
            <person name="Holroyd S."/>
            <person name="Jagels K."/>
            <person name="Krogh A."/>
            <person name="Larsen T.S."/>
            <person name="Leather S."/>
            <person name="Moule S."/>
            <person name="O'Gaora P."/>
            <person name="Parry C."/>
            <person name="Quail M.A."/>
            <person name="Rutherford K.M."/>
            <person name="Simmonds M."/>
            <person name="Skelton J."/>
            <person name="Stevens K."/>
            <person name="Whitehead S."/>
            <person name="Barrell B.G."/>
        </authorList>
    </citation>
    <scope>NUCLEOTIDE SEQUENCE [LARGE SCALE GENOMIC DNA]</scope>
    <source>
        <strain>CT18</strain>
    </source>
</reference>
<reference key="2">
    <citation type="journal article" date="2003" name="J. Bacteriol.">
        <title>Comparative genomics of Salmonella enterica serovar Typhi strains Ty2 and CT18.</title>
        <authorList>
            <person name="Deng W."/>
            <person name="Liou S.-R."/>
            <person name="Plunkett G. III"/>
            <person name="Mayhew G.F."/>
            <person name="Rose D.J."/>
            <person name="Burland V."/>
            <person name="Kodoyianni V."/>
            <person name="Schwartz D.C."/>
            <person name="Blattner F.R."/>
        </authorList>
    </citation>
    <scope>NUCLEOTIDE SEQUENCE [LARGE SCALE GENOMIC DNA]</scope>
    <source>
        <strain>ATCC 700931 / Ty2</strain>
    </source>
</reference>
<proteinExistence type="inferred from homology"/>